<reference key="1">
    <citation type="journal article" date="2003" name="Nat. Genet.">
        <title>Comparative analysis of the genome sequences of Bordetella pertussis, Bordetella parapertussis and Bordetella bronchiseptica.</title>
        <authorList>
            <person name="Parkhill J."/>
            <person name="Sebaihia M."/>
            <person name="Preston A."/>
            <person name="Murphy L.D."/>
            <person name="Thomson N.R."/>
            <person name="Harris D.E."/>
            <person name="Holden M.T.G."/>
            <person name="Churcher C.M."/>
            <person name="Bentley S.D."/>
            <person name="Mungall K.L."/>
            <person name="Cerdeno-Tarraga A.-M."/>
            <person name="Temple L."/>
            <person name="James K.D."/>
            <person name="Harris B."/>
            <person name="Quail M.A."/>
            <person name="Achtman M."/>
            <person name="Atkin R."/>
            <person name="Baker S."/>
            <person name="Basham D."/>
            <person name="Bason N."/>
            <person name="Cherevach I."/>
            <person name="Chillingworth T."/>
            <person name="Collins M."/>
            <person name="Cronin A."/>
            <person name="Davis P."/>
            <person name="Doggett J."/>
            <person name="Feltwell T."/>
            <person name="Goble A."/>
            <person name="Hamlin N."/>
            <person name="Hauser H."/>
            <person name="Holroyd S."/>
            <person name="Jagels K."/>
            <person name="Leather S."/>
            <person name="Moule S."/>
            <person name="Norberczak H."/>
            <person name="O'Neil S."/>
            <person name="Ormond D."/>
            <person name="Price C."/>
            <person name="Rabbinowitsch E."/>
            <person name="Rutter S."/>
            <person name="Sanders M."/>
            <person name="Saunders D."/>
            <person name="Seeger K."/>
            <person name="Sharp S."/>
            <person name="Simmonds M."/>
            <person name="Skelton J."/>
            <person name="Squares R."/>
            <person name="Squares S."/>
            <person name="Stevens K."/>
            <person name="Unwin L."/>
            <person name="Whitehead S."/>
            <person name="Barrell B.G."/>
            <person name="Maskell D.J."/>
        </authorList>
    </citation>
    <scope>NUCLEOTIDE SEQUENCE [LARGE SCALE GENOMIC DNA]</scope>
    <source>
        <strain>ATCC BAA-588 / NCTC 13252 / RB50</strain>
    </source>
</reference>
<accession>Q7WH39</accession>
<feature type="chain" id="PRO_0000178436" description="Large ribosomal subunit protein bL28">
    <location>
        <begin position="1"/>
        <end position="78"/>
    </location>
</feature>
<comment type="similarity">
    <text evidence="1">Belongs to the bacterial ribosomal protein bL28 family.</text>
</comment>
<evidence type="ECO:0000255" key="1">
    <source>
        <dbReference type="HAMAP-Rule" id="MF_00373"/>
    </source>
</evidence>
<evidence type="ECO:0000305" key="2"/>
<dbReference type="EMBL" id="BX640447">
    <property type="protein sequence ID" value="CAE33863.1"/>
    <property type="molecule type" value="Genomic_DNA"/>
</dbReference>
<dbReference type="RefSeq" id="WP_003810297.1">
    <property type="nucleotide sequence ID" value="NC_002927.3"/>
</dbReference>
<dbReference type="SMR" id="Q7WH39"/>
<dbReference type="GeneID" id="93203501"/>
<dbReference type="KEGG" id="bbr:BB3371"/>
<dbReference type="eggNOG" id="COG0227">
    <property type="taxonomic scope" value="Bacteria"/>
</dbReference>
<dbReference type="HOGENOM" id="CLU_064548_3_1_4"/>
<dbReference type="Proteomes" id="UP000001027">
    <property type="component" value="Chromosome"/>
</dbReference>
<dbReference type="GO" id="GO:0022625">
    <property type="term" value="C:cytosolic large ribosomal subunit"/>
    <property type="evidence" value="ECO:0007669"/>
    <property type="project" value="TreeGrafter"/>
</dbReference>
<dbReference type="GO" id="GO:0003735">
    <property type="term" value="F:structural constituent of ribosome"/>
    <property type="evidence" value="ECO:0007669"/>
    <property type="project" value="InterPro"/>
</dbReference>
<dbReference type="GO" id="GO:0006412">
    <property type="term" value="P:translation"/>
    <property type="evidence" value="ECO:0007669"/>
    <property type="project" value="UniProtKB-UniRule"/>
</dbReference>
<dbReference type="FunFam" id="2.30.170.40:FF:000001">
    <property type="entry name" value="50S ribosomal protein L28"/>
    <property type="match status" value="1"/>
</dbReference>
<dbReference type="Gene3D" id="2.30.170.40">
    <property type="entry name" value="Ribosomal protein L28/L24"/>
    <property type="match status" value="1"/>
</dbReference>
<dbReference type="HAMAP" id="MF_00373">
    <property type="entry name" value="Ribosomal_bL28"/>
    <property type="match status" value="1"/>
</dbReference>
<dbReference type="InterPro" id="IPR026569">
    <property type="entry name" value="Ribosomal_bL28"/>
</dbReference>
<dbReference type="InterPro" id="IPR034704">
    <property type="entry name" value="Ribosomal_bL28/bL31-like_sf"/>
</dbReference>
<dbReference type="InterPro" id="IPR001383">
    <property type="entry name" value="Ribosomal_bL28_bact-type"/>
</dbReference>
<dbReference type="InterPro" id="IPR037147">
    <property type="entry name" value="Ribosomal_bL28_sf"/>
</dbReference>
<dbReference type="NCBIfam" id="TIGR00009">
    <property type="entry name" value="L28"/>
    <property type="match status" value="1"/>
</dbReference>
<dbReference type="PANTHER" id="PTHR13528">
    <property type="entry name" value="39S RIBOSOMAL PROTEIN L28, MITOCHONDRIAL"/>
    <property type="match status" value="1"/>
</dbReference>
<dbReference type="PANTHER" id="PTHR13528:SF2">
    <property type="entry name" value="LARGE RIBOSOMAL SUBUNIT PROTEIN BL28M"/>
    <property type="match status" value="1"/>
</dbReference>
<dbReference type="Pfam" id="PF00830">
    <property type="entry name" value="Ribosomal_L28"/>
    <property type="match status" value="1"/>
</dbReference>
<dbReference type="SUPFAM" id="SSF143800">
    <property type="entry name" value="L28p-like"/>
    <property type="match status" value="1"/>
</dbReference>
<organism>
    <name type="scientific">Bordetella bronchiseptica (strain ATCC BAA-588 / NCTC 13252 / RB50)</name>
    <name type="common">Alcaligenes bronchisepticus</name>
    <dbReference type="NCBI Taxonomy" id="257310"/>
    <lineage>
        <taxon>Bacteria</taxon>
        <taxon>Pseudomonadati</taxon>
        <taxon>Pseudomonadota</taxon>
        <taxon>Betaproteobacteria</taxon>
        <taxon>Burkholderiales</taxon>
        <taxon>Alcaligenaceae</taxon>
        <taxon>Bordetella</taxon>
    </lineage>
</organism>
<protein>
    <recommendedName>
        <fullName evidence="1">Large ribosomal subunit protein bL28</fullName>
    </recommendedName>
    <alternativeName>
        <fullName evidence="2">50S ribosomal protein L28</fullName>
    </alternativeName>
</protein>
<sequence length="78" mass="8845">MARVCQVTGKGPMVGNNVSHANNKTKRRFLPNLQSRRFWVESENRWVRLRVTAKAIRTIDKNGIDAVLADLRARGEAV</sequence>
<proteinExistence type="inferred from homology"/>
<keyword id="KW-0687">Ribonucleoprotein</keyword>
<keyword id="KW-0689">Ribosomal protein</keyword>
<name>RL28_BORBR</name>
<gene>
    <name evidence="1" type="primary">rpmB</name>
    <name type="ordered locus">BB3371</name>
</gene>